<sequence>MTQSNPNEQNVELNRTSLYWGLLLIFVLAVLFSNYFFN</sequence>
<proteinExistence type="evidence at transcript level"/>
<protein>
    <recommendedName>
        <fullName evidence="1">Photosystem II reaction center protein L</fullName>
        <shortName evidence="1">PSII-L</shortName>
    </recommendedName>
</protein>
<feature type="chain" id="PRO_0000219748" description="Photosystem II reaction center protein L">
    <location>
        <begin position="1"/>
        <end position="38"/>
    </location>
</feature>
<feature type="transmembrane region" description="Helical" evidence="1">
    <location>
        <begin position="17"/>
        <end position="37"/>
    </location>
</feature>
<keyword id="KW-0150">Chloroplast</keyword>
<keyword id="KW-0472">Membrane</keyword>
<keyword id="KW-0602">Photosynthesis</keyword>
<keyword id="KW-0604">Photosystem II</keyword>
<keyword id="KW-0934">Plastid</keyword>
<keyword id="KW-0674">Reaction center</keyword>
<keyword id="KW-0691">RNA editing</keyword>
<keyword id="KW-0793">Thylakoid</keyword>
<keyword id="KW-0812">Transmembrane</keyword>
<keyword id="KW-1133">Transmembrane helix</keyword>
<organism>
    <name type="scientific">Nicotiana tomentosiformis</name>
    <name type="common">Tobacco</name>
    <dbReference type="NCBI Taxonomy" id="4098"/>
    <lineage>
        <taxon>Eukaryota</taxon>
        <taxon>Viridiplantae</taxon>
        <taxon>Streptophyta</taxon>
        <taxon>Embryophyta</taxon>
        <taxon>Tracheophyta</taxon>
        <taxon>Spermatophyta</taxon>
        <taxon>Magnoliopsida</taxon>
        <taxon>eudicotyledons</taxon>
        <taxon>Gunneridae</taxon>
        <taxon>Pentapetalae</taxon>
        <taxon>asterids</taxon>
        <taxon>lamiids</taxon>
        <taxon>Solanales</taxon>
        <taxon>Solanaceae</taxon>
        <taxon>Nicotianoideae</taxon>
        <taxon>Nicotianeae</taxon>
        <taxon>Nicotiana</taxon>
    </lineage>
</organism>
<geneLocation type="chloroplast"/>
<dbReference type="EMBL" id="AB098239">
    <property type="protein sequence ID" value="BAC77578.1"/>
    <property type="molecule type" value="Genomic_DNA"/>
</dbReference>
<dbReference type="EMBL" id="AB240139">
    <property type="protein sequence ID" value="BAE48018.1"/>
    <property type="molecule type" value="Genomic_DNA"/>
</dbReference>
<dbReference type="RefSeq" id="YP_398880.1">
    <property type="nucleotide sequence ID" value="NC_007602.1"/>
</dbReference>
<dbReference type="SMR" id="P60146"/>
<dbReference type="GeneID" id="3776283"/>
<dbReference type="KEGG" id="nto:3776283"/>
<dbReference type="OrthoDB" id="99at2759"/>
<dbReference type="GO" id="GO:0009535">
    <property type="term" value="C:chloroplast thylakoid membrane"/>
    <property type="evidence" value="ECO:0007669"/>
    <property type="project" value="UniProtKB-SubCell"/>
</dbReference>
<dbReference type="GO" id="GO:0009539">
    <property type="term" value="C:photosystem II reaction center"/>
    <property type="evidence" value="ECO:0007669"/>
    <property type="project" value="InterPro"/>
</dbReference>
<dbReference type="GO" id="GO:0015979">
    <property type="term" value="P:photosynthesis"/>
    <property type="evidence" value="ECO:0007669"/>
    <property type="project" value="UniProtKB-UniRule"/>
</dbReference>
<dbReference type="HAMAP" id="MF_01317">
    <property type="entry name" value="PSII_PsbL"/>
    <property type="match status" value="1"/>
</dbReference>
<dbReference type="InterPro" id="IPR003372">
    <property type="entry name" value="PSII_PsbL"/>
</dbReference>
<dbReference type="InterPro" id="IPR037266">
    <property type="entry name" value="PSII_PsbL_sf"/>
</dbReference>
<dbReference type="NCBIfam" id="NF001972">
    <property type="entry name" value="PRK00753.1"/>
    <property type="match status" value="1"/>
</dbReference>
<dbReference type="Pfam" id="PF02419">
    <property type="entry name" value="PsbL"/>
    <property type="match status" value="1"/>
</dbReference>
<dbReference type="SUPFAM" id="SSF161017">
    <property type="entry name" value="Photosystem II reaction center protein L, PsbL"/>
    <property type="match status" value="1"/>
</dbReference>
<reference key="1">
    <citation type="journal article" date="2003" name="Mol. Biol. Evol.">
        <title>Identification of RNA editing sites in chloroplast transcripts from the maternal and paternal progenitors of tobacco (Nicotiana tabacum): comparative analysis shows the involvement of distinct trans-factors for ndhB editing.</title>
        <authorList>
            <person name="Sasaki T."/>
            <person name="Yukawa Y."/>
            <person name="Miyamoto T."/>
            <person name="Obokata J."/>
            <person name="Sugiura M."/>
        </authorList>
    </citation>
    <scope>NUCLEOTIDE SEQUENCE [GENOMIC DNA]</scope>
    <scope>RNA EDITING OF INITIATOR CODON</scope>
    <source>
        <tissue>Leaf</tissue>
    </source>
</reference>
<reference key="2">
    <citation type="journal article" date="2006" name="Mol. Genet. Genomics">
        <title>The chloroplast genome of Nicotiana sylvestris and Nicotiana tomentosiformis: complete sequencing confirms that the Nicotiana sylvestris progenitor is the maternal genome donor of Nicotiana tabacum.</title>
        <authorList>
            <person name="Yukawa M."/>
            <person name="Tsudzuki T."/>
            <person name="Sugiura M."/>
        </authorList>
    </citation>
    <scope>NUCLEOTIDE SEQUENCE [LARGE SCALE GENOMIC DNA]</scope>
</reference>
<gene>
    <name evidence="1" type="primary">psbL</name>
</gene>
<name>PSBL_NICTO</name>
<evidence type="ECO:0000255" key="1">
    <source>
        <dbReference type="HAMAP-Rule" id="MF_01317"/>
    </source>
</evidence>
<evidence type="ECO:0000269" key="2">
    <source>
    </source>
</evidence>
<comment type="function">
    <text evidence="1">One of the components of the core complex of photosystem II (PSII). PSII is a light-driven water:plastoquinone oxidoreductase that uses light energy to abstract electrons from H(2)O, generating O(2) and a proton gradient subsequently used for ATP formation. It consists of a core antenna complex that captures photons, and an electron transfer chain that converts photonic excitation into a charge separation. This subunit is found at the monomer-monomer interface and is required for correct PSII assembly and/or dimerization.</text>
</comment>
<comment type="subunit">
    <text evidence="1">PSII is composed of 1 copy each of membrane proteins PsbA, PsbB, PsbC, PsbD, PsbE, PsbF, PsbH, PsbI, PsbJ, PsbK, PsbL, PsbM, PsbT, PsbX, PsbY, PsbZ, Psb30/Ycf12, at least 3 peripheral proteins of the oxygen-evolving complex and a large number of cofactors. It forms dimeric complexes.</text>
</comment>
<comment type="subcellular location">
    <subcellularLocation>
        <location evidence="1">Plastid</location>
        <location evidence="1">Chloroplast thylakoid membrane</location>
        <topology evidence="1">Single-pass membrane protein</topology>
    </subcellularLocation>
</comment>
<comment type="RNA editing">
    <location>
        <position position="1" evidence="2"/>
    </location>
    <text>The initiator methionine is created by RNA editing.</text>
</comment>
<comment type="similarity">
    <text evidence="1">Belongs to the PsbL family.</text>
</comment>
<accession>P60146</accession>
<accession>O47030</accession>
<accession>P12166</accession>
<accession>P12167</accession>
<accession>Q33C17</accession>
<accession>Q34007</accession>